<reference key="1">
    <citation type="journal article" date="2006" name="J. Bacteriol.">
        <title>Comparison of the genome sequence of the poultry pathogen Bordetella avium with those of B. bronchiseptica, B. pertussis, and B. parapertussis reveals extensive diversity in surface structures associated with host interaction.</title>
        <authorList>
            <person name="Sebaihia M."/>
            <person name="Preston A."/>
            <person name="Maskell D.J."/>
            <person name="Kuzmiak H."/>
            <person name="Connell T.D."/>
            <person name="King N.D."/>
            <person name="Orndorff P.E."/>
            <person name="Miyamoto D.M."/>
            <person name="Thomson N.R."/>
            <person name="Harris D."/>
            <person name="Goble A."/>
            <person name="Lord A."/>
            <person name="Murphy L."/>
            <person name="Quail M.A."/>
            <person name="Rutter S."/>
            <person name="Squares R."/>
            <person name="Squares S."/>
            <person name="Woodward J."/>
            <person name="Parkhill J."/>
            <person name="Temple L.M."/>
        </authorList>
    </citation>
    <scope>NUCLEOTIDE SEQUENCE [LARGE SCALE GENOMIC DNA]</scope>
    <source>
        <strain>197N</strain>
    </source>
</reference>
<accession>Q2KXM9</accession>
<comment type="function">
    <text evidence="1">The UvrABC repair system catalyzes the recognition and processing of DNA lesions. UvrC both incises the 5' and 3' sides of the lesion. The N-terminal half is responsible for the 3' incision and the C-terminal half is responsible for the 5' incision.</text>
</comment>
<comment type="subunit">
    <text evidence="1">Interacts with UvrB in an incision complex.</text>
</comment>
<comment type="subcellular location">
    <subcellularLocation>
        <location evidence="1">Cytoplasm</location>
    </subcellularLocation>
</comment>
<comment type="similarity">
    <text evidence="1">Belongs to the UvrC family.</text>
</comment>
<comment type="sequence caution" evidence="2">
    <conflict type="erroneous initiation">
        <sequence resource="EMBL-CDS" id="CAJ50066"/>
    </conflict>
</comment>
<name>UVRC_BORA1</name>
<evidence type="ECO:0000255" key="1">
    <source>
        <dbReference type="HAMAP-Rule" id="MF_00203"/>
    </source>
</evidence>
<evidence type="ECO:0000305" key="2"/>
<dbReference type="EMBL" id="AM167904">
    <property type="protein sequence ID" value="CAJ50066.1"/>
    <property type="status" value="ALT_INIT"/>
    <property type="molecule type" value="Genomic_DNA"/>
</dbReference>
<dbReference type="RefSeq" id="WP_039051595.1">
    <property type="nucleotide sequence ID" value="NC_010645.1"/>
</dbReference>
<dbReference type="SMR" id="Q2KXM9"/>
<dbReference type="STRING" id="360910.BAV2456"/>
<dbReference type="KEGG" id="bav:BAV2456"/>
<dbReference type="eggNOG" id="COG0322">
    <property type="taxonomic scope" value="Bacteria"/>
</dbReference>
<dbReference type="HOGENOM" id="CLU_014841_3_0_4"/>
<dbReference type="OrthoDB" id="9804933at2"/>
<dbReference type="Proteomes" id="UP000001977">
    <property type="component" value="Chromosome"/>
</dbReference>
<dbReference type="GO" id="GO:0005737">
    <property type="term" value="C:cytoplasm"/>
    <property type="evidence" value="ECO:0007669"/>
    <property type="project" value="UniProtKB-SubCell"/>
</dbReference>
<dbReference type="GO" id="GO:0009380">
    <property type="term" value="C:excinuclease repair complex"/>
    <property type="evidence" value="ECO:0007669"/>
    <property type="project" value="InterPro"/>
</dbReference>
<dbReference type="GO" id="GO:0003677">
    <property type="term" value="F:DNA binding"/>
    <property type="evidence" value="ECO:0007669"/>
    <property type="project" value="UniProtKB-UniRule"/>
</dbReference>
<dbReference type="GO" id="GO:0009381">
    <property type="term" value="F:excinuclease ABC activity"/>
    <property type="evidence" value="ECO:0007669"/>
    <property type="project" value="UniProtKB-UniRule"/>
</dbReference>
<dbReference type="GO" id="GO:0006289">
    <property type="term" value="P:nucleotide-excision repair"/>
    <property type="evidence" value="ECO:0007669"/>
    <property type="project" value="UniProtKB-UniRule"/>
</dbReference>
<dbReference type="GO" id="GO:0009432">
    <property type="term" value="P:SOS response"/>
    <property type="evidence" value="ECO:0007669"/>
    <property type="project" value="UniProtKB-UniRule"/>
</dbReference>
<dbReference type="CDD" id="cd10434">
    <property type="entry name" value="GIY-YIG_UvrC_Cho"/>
    <property type="match status" value="1"/>
</dbReference>
<dbReference type="FunFam" id="3.30.420.340:FF:000001">
    <property type="entry name" value="UvrABC system protein C"/>
    <property type="match status" value="1"/>
</dbReference>
<dbReference type="FunFam" id="3.40.1440.10:FF:000001">
    <property type="entry name" value="UvrABC system protein C"/>
    <property type="match status" value="1"/>
</dbReference>
<dbReference type="Gene3D" id="1.10.150.20">
    <property type="entry name" value="5' to 3' exonuclease, C-terminal subdomain"/>
    <property type="match status" value="1"/>
</dbReference>
<dbReference type="Gene3D" id="3.40.1440.10">
    <property type="entry name" value="GIY-YIG endonuclease"/>
    <property type="match status" value="1"/>
</dbReference>
<dbReference type="Gene3D" id="4.10.860.10">
    <property type="entry name" value="UVR domain"/>
    <property type="match status" value="1"/>
</dbReference>
<dbReference type="Gene3D" id="3.30.420.340">
    <property type="entry name" value="UvrC, RNAse H endonuclease domain"/>
    <property type="match status" value="1"/>
</dbReference>
<dbReference type="HAMAP" id="MF_00203">
    <property type="entry name" value="UvrC"/>
    <property type="match status" value="1"/>
</dbReference>
<dbReference type="InterPro" id="IPR000305">
    <property type="entry name" value="GIY-YIG_endonuc"/>
</dbReference>
<dbReference type="InterPro" id="IPR035901">
    <property type="entry name" value="GIY-YIG_endonuc_sf"/>
</dbReference>
<dbReference type="InterPro" id="IPR047296">
    <property type="entry name" value="GIY-YIG_UvrC_Cho"/>
</dbReference>
<dbReference type="InterPro" id="IPR003583">
    <property type="entry name" value="Hlx-hairpin-Hlx_DNA-bd_motif"/>
</dbReference>
<dbReference type="InterPro" id="IPR010994">
    <property type="entry name" value="RuvA_2-like"/>
</dbReference>
<dbReference type="InterPro" id="IPR001943">
    <property type="entry name" value="UVR_dom"/>
</dbReference>
<dbReference type="InterPro" id="IPR036876">
    <property type="entry name" value="UVR_dom_sf"/>
</dbReference>
<dbReference type="InterPro" id="IPR050066">
    <property type="entry name" value="UvrABC_protein_C"/>
</dbReference>
<dbReference type="InterPro" id="IPR004791">
    <property type="entry name" value="UvrC"/>
</dbReference>
<dbReference type="InterPro" id="IPR001162">
    <property type="entry name" value="UvrC_RNase_H_dom"/>
</dbReference>
<dbReference type="InterPro" id="IPR038476">
    <property type="entry name" value="UvrC_RNase_H_dom_sf"/>
</dbReference>
<dbReference type="NCBIfam" id="NF001824">
    <property type="entry name" value="PRK00558.1-5"/>
    <property type="match status" value="1"/>
</dbReference>
<dbReference type="NCBIfam" id="TIGR00194">
    <property type="entry name" value="uvrC"/>
    <property type="match status" value="1"/>
</dbReference>
<dbReference type="PANTHER" id="PTHR30562:SF1">
    <property type="entry name" value="UVRABC SYSTEM PROTEIN C"/>
    <property type="match status" value="1"/>
</dbReference>
<dbReference type="PANTHER" id="PTHR30562">
    <property type="entry name" value="UVRC/OXIDOREDUCTASE"/>
    <property type="match status" value="1"/>
</dbReference>
<dbReference type="Pfam" id="PF01541">
    <property type="entry name" value="GIY-YIG"/>
    <property type="match status" value="1"/>
</dbReference>
<dbReference type="Pfam" id="PF14520">
    <property type="entry name" value="HHH_5"/>
    <property type="match status" value="1"/>
</dbReference>
<dbReference type="Pfam" id="PF02151">
    <property type="entry name" value="UVR"/>
    <property type="match status" value="1"/>
</dbReference>
<dbReference type="Pfam" id="PF22920">
    <property type="entry name" value="UvrC_RNaseH"/>
    <property type="match status" value="1"/>
</dbReference>
<dbReference type="Pfam" id="PF08459">
    <property type="entry name" value="UvrC_RNaseH_dom"/>
    <property type="match status" value="1"/>
</dbReference>
<dbReference type="SMART" id="SM00465">
    <property type="entry name" value="GIYc"/>
    <property type="match status" value="1"/>
</dbReference>
<dbReference type="SMART" id="SM00278">
    <property type="entry name" value="HhH1"/>
    <property type="match status" value="2"/>
</dbReference>
<dbReference type="SUPFAM" id="SSF46600">
    <property type="entry name" value="C-terminal UvrC-binding domain of UvrB"/>
    <property type="match status" value="1"/>
</dbReference>
<dbReference type="SUPFAM" id="SSF82771">
    <property type="entry name" value="GIY-YIG endonuclease"/>
    <property type="match status" value="1"/>
</dbReference>
<dbReference type="SUPFAM" id="SSF47781">
    <property type="entry name" value="RuvA domain 2-like"/>
    <property type="match status" value="1"/>
</dbReference>
<dbReference type="PROSITE" id="PS50164">
    <property type="entry name" value="GIY_YIG"/>
    <property type="match status" value="1"/>
</dbReference>
<dbReference type="PROSITE" id="PS50151">
    <property type="entry name" value="UVR"/>
    <property type="match status" value="1"/>
</dbReference>
<dbReference type="PROSITE" id="PS50165">
    <property type="entry name" value="UVRC"/>
    <property type="match status" value="1"/>
</dbReference>
<sequence>MPDEFNLKSFLADLPHLPGVYRHLDAAGEVMYVGKARDLKKRVSSYFQKTLASPRIAQMVSKVVRLEVTVTRSEAEALILENNLIKSLRPRYNILFRDDKSYPYLLITAHEWPRIAYYRGSTSKRGQYFGPYPNSWAVRETIQILQKVFRLRTCEDTVFANRSRPCLLYQIGRCSGPCVQAIDAEDYRRDVQRAARFLNGEAREVMDEIEARMQQASGELRFEEAAVLRDQMGSLSKVLHQQTMENVGGEDTDVIAVASAGGKVCVNLAMVRGGRHLGDKPFFPSHADGEEAAQVQEAFIAQHYADNVLPPVLVCSHALPDVDLIGLLSEQAGTRCRVLTRPQGVRRSWLEQAQKNAEMALARALTESGARAARTLSLAEALDLDTDEAALDALRIECFDISHTAGEATQASCVVFLHHDMQPSLYRRYNIVGITPGDDYAAMRQVLTRRFAKVTDGEAPMPGLVLIDGGKGQVEVARQVFVELGLDIGALVGVAKGEGRKVGLETLVFADARAPLALGKASAALMLIAQVRDEAHRFAITGMRAKRAKTRNVSRLEEIEGVGAKRRQRLLARFGGLSGVTSASIEDLASVDGISMDLAERIYDALH</sequence>
<protein>
    <recommendedName>
        <fullName evidence="1">UvrABC system protein C</fullName>
        <shortName evidence="1">Protein UvrC</shortName>
    </recommendedName>
    <alternativeName>
        <fullName evidence="1">Excinuclease ABC subunit C</fullName>
    </alternativeName>
</protein>
<organism>
    <name type="scientific">Bordetella avium (strain 197N)</name>
    <dbReference type="NCBI Taxonomy" id="360910"/>
    <lineage>
        <taxon>Bacteria</taxon>
        <taxon>Pseudomonadati</taxon>
        <taxon>Pseudomonadota</taxon>
        <taxon>Betaproteobacteria</taxon>
        <taxon>Burkholderiales</taxon>
        <taxon>Alcaligenaceae</taxon>
        <taxon>Bordetella</taxon>
    </lineage>
</organism>
<proteinExistence type="inferred from homology"/>
<keyword id="KW-0963">Cytoplasm</keyword>
<keyword id="KW-0227">DNA damage</keyword>
<keyword id="KW-0228">DNA excision</keyword>
<keyword id="KW-0234">DNA repair</keyword>
<keyword id="KW-0267">Excision nuclease</keyword>
<keyword id="KW-1185">Reference proteome</keyword>
<keyword id="KW-0742">SOS response</keyword>
<feature type="chain" id="PRO_0000264870" description="UvrABC system protein C">
    <location>
        <begin position="1"/>
        <end position="607"/>
    </location>
</feature>
<feature type="domain" description="GIY-YIG" evidence="1">
    <location>
        <begin position="16"/>
        <end position="94"/>
    </location>
</feature>
<feature type="domain" description="UVR" evidence="1">
    <location>
        <begin position="203"/>
        <end position="238"/>
    </location>
</feature>
<gene>
    <name evidence="1" type="primary">uvrC</name>
    <name type="ordered locus">BAV2456</name>
</gene>